<proteinExistence type="inferred from homology"/>
<protein>
    <recommendedName>
        <fullName evidence="1">Nitrogenase-stabilizing/protective protein NifW</fullName>
    </recommendedName>
</protein>
<reference key="1">
    <citation type="submission" date="2006-03" db="EMBL/GenBank/DDBJ databases">
        <title>Complete sequence of Rhodopseudomonas palustris BisB18.</title>
        <authorList>
            <consortium name="US DOE Joint Genome Institute"/>
            <person name="Copeland A."/>
            <person name="Lucas S."/>
            <person name="Lapidus A."/>
            <person name="Barry K."/>
            <person name="Detter J.C."/>
            <person name="Glavina del Rio T."/>
            <person name="Hammon N."/>
            <person name="Israni S."/>
            <person name="Dalin E."/>
            <person name="Tice H."/>
            <person name="Pitluck S."/>
            <person name="Chain P."/>
            <person name="Malfatti S."/>
            <person name="Shin M."/>
            <person name="Vergez L."/>
            <person name="Schmutz J."/>
            <person name="Larimer F."/>
            <person name="Land M."/>
            <person name="Hauser L."/>
            <person name="Pelletier D.A."/>
            <person name="Kyrpides N."/>
            <person name="Anderson I."/>
            <person name="Oda Y."/>
            <person name="Harwood C.S."/>
            <person name="Richardson P."/>
        </authorList>
    </citation>
    <scope>NUCLEOTIDE SEQUENCE [LARGE SCALE GENOMIC DNA]</scope>
    <source>
        <strain>BisB18</strain>
    </source>
</reference>
<gene>
    <name evidence="1" type="primary">nifW</name>
    <name type="ordered locus">RPC_4449</name>
</gene>
<keyword id="KW-0535">Nitrogen fixation</keyword>
<evidence type="ECO:0000255" key="1">
    <source>
        <dbReference type="HAMAP-Rule" id="MF_00529"/>
    </source>
</evidence>
<dbReference type="EMBL" id="CP000301">
    <property type="protein sequence ID" value="ABD89972.1"/>
    <property type="molecule type" value="Genomic_DNA"/>
</dbReference>
<dbReference type="STRING" id="316056.RPC_4449"/>
<dbReference type="DNASU" id="3973075"/>
<dbReference type="KEGG" id="rpc:RPC_4449"/>
<dbReference type="eggNOG" id="ENOG50330W8">
    <property type="taxonomic scope" value="Bacteria"/>
</dbReference>
<dbReference type="HOGENOM" id="CLU_145318_0_0_5"/>
<dbReference type="OrthoDB" id="9811868at2"/>
<dbReference type="GO" id="GO:0009399">
    <property type="term" value="P:nitrogen fixation"/>
    <property type="evidence" value="ECO:0007669"/>
    <property type="project" value="UniProtKB-UniRule"/>
</dbReference>
<dbReference type="HAMAP" id="MF_00529">
    <property type="entry name" value="NifW"/>
    <property type="match status" value="1"/>
</dbReference>
<dbReference type="InterPro" id="IPR004893">
    <property type="entry name" value="NifW"/>
</dbReference>
<dbReference type="NCBIfam" id="NF002009">
    <property type="entry name" value="PRK00810.1"/>
    <property type="match status" value="1"/>
</dbReference>
<dbReference type="Pfam" id="PF03206">
    <property type="entry name" value="NifW"/>
    <property type="match status" value="1"/>
</dbReference>
<dbReference type="PIRSF" id="PIRSF005790">
    <property type="entry name" value="NifW"/>
    <property type="match status" value="1"/>
</dbReference>
<feature type="chain" id="PRO_0000265754" description="Nitrogenase-stabilizing/protective protein NifW">
    <location>
        <begin position="1"/>
        <end position="115"/>
    </location>
</feature>
<organism>
    <name type="scientific">Rhodopseudomonas palustris (strain BisB18)</name>
    <dbReference type="NCBI Taxonomy" id="316056"/>
    <lineage>
        <taxon>Bacteria</taxon>
        <taxon>Pseudomonadati</taxon>
        <taxon>Pseudomonadota</taxon>
        <taxon>Alphaproteobacteria</taxon>
        <taxon>Hyphomicrobiales</taxon>
        <taxon>Nitrobacteraceae</taxon>
        <taxon>Rhodopseudomonas</taxon>
    </lineage>
</organism>
<sequence length="115" mass="12693">MCSPTQPTLAAGNVVDQLKRAGSAEEFFTLLGVCFDPKVLDVARLHILKRMGQYLASEDLEAMPNSVAAARCKAVLERAYEDFLTSTPLDQRVFKVLKDAVAPKKTHFVPLETLK</sequence>
<comment type="function">
    <text evidence="1">May protect the nitrogenase Fe-Mo protein from oxidative damage.</text>
</comment>
<comment type="subunit">
    <text evidence="1">Homotrimer; associates with NifD.</text>
</comment>
<comment type="similarity">
    <text evidence="1">Belongs to the NifW family.</text>
</comment>
<name>NIFW_RHOPB</name>
<accession>Q20Y14</accession>